<reference key="1">
    <citation type="journal article" date="2005" name="Nat. Biotechnol.">
        <title>Complete genome sequence of the plant commensal Pseudomonas fluorescens Pf-5.</title>
        <authorList>
            <person name="Paulsen I.T."/>
            <person name="Press C.M."/>
            <person name="Ravel J."/>
            <person name="Kobayashi D.Y."/>
            <person name="Myers G.S.A."/>
            <person name="Mavrodi D.V."/>
            <person name="DeBoy R.T."/>
            <person name="Seshadri R."/>
            <person name="Ren Q."/>
            <person name="Madupu R."/>
            <person name="Dodson R.J."/>
            <person name="Durkin A.S."/>
            <person name="Brinkac L.M."/>
            <person name="Daugherty S.C."/>
            <person name="Sullivan S.A."/>
            <person name="Rosovitz M.J."/>
            <person name="Gwinn M.L."/>
            <person name="Zhou L."/>
            <person name="Schneider D.J."/>
            <person name="Cartinhour S.W."/>
            <person name="Nelson W.C."/>
            <person name="Weidman J."/>
            <person name="Watkins K."/>
            <person name="Tran K."/>
            <person name="Khouri H."/>
            <person name="Pierson E.A."/>
            <person name="Pierson L.S. III"/>
            <person name="Thomashow L.S."/>
            <person name="Loper J.E."/>
        </authorList>
    </citation>
    <scope>NUCLEOTIDE SEQUENCE [LARGE SCALE GENOMIC DNA]</scope>
    <source>
        <strain>ATCC BAA-477 / NRRL B-23932 / Pf-5</strain>
    </source>
</reference>
<comment type="function">
    <text evidence="1">Catalyzes the methylthiolation of an aspartic acid residue of ribosomal protein uS12.</text>
</comment>
<comment type="catalytic activity">
    <reaction evidence="1">
        <text>L-aspartate(89)-[ribosomal protein uS12]-hydrogen + (sulfur carrier)-SH + AH2 + 2 S-adenosyl-L-methionine = 3-methylsulfanyl-L-aspartate(89)-[ribosomal protein uS12]-hydrogen + (sulfur carrier)-H + 5'-deoxyadenosine + L-methionine + A + S-adenosyl-L-homocysteine + 2 H(+)</text>
        <dbReference type="Rhea" id="RHEA:37087"/>
        <dbReference type="Rhea" id="RHEA-COMP:10460"/>
        <dbReference type="Rhea" id="RHEA-COMP:10461"/>
        <dbReference type="Rhea" id="RHEA-COMP:14737"/>
        <dbReference type="Rhea" id="RHEA-COMP:14739"/>
        <dbReference type="ChEBI" id="CHEBI:13193"/>
        <dbReference type="ChEBI" id="CHEBI:15378"/>
        <dbReference type="ChEBI" id="CHEBI:17319"/>
        <dbReference type="ChEBI" id="CHEBI:17499"/>
        <dbReference type="ChEBI" id="CHEBI:29917"/>
        <dbReference type="ChEBI" id="CHEBI:29961"/>
        <dbReference type="ChEBI" id="CHEBI:57844"/>
        <dbReference type="ChEBI" id="CHEBI:57856"/>
        <dbReference type="ChEBI" id="CHEBI:59789"/>
        <dbReference type="ChEBI" id="CHEBI:64428"/>
        <dbReference type="ChEBI" id="CHEBI:73599"/>
        <dbReference type="EC" id="2.8.4.4"/>
    </reaction>
</comment>
<comment type="cofactor">
    <cofactor evidence="1">
        <name>[4Fe-4S] cluster</name>
        <dbReference type="ChEBI" id="CHEBI:49883"/>
    </cofactor>
    <text evidence="1">Binds 2 [4Fe-4S] clusters. One cluster is coordinated with 3 cysteines and an exchangeable S-adenosyl-L-methionine.</text>
</comment>
<comment type="subcellular location">
    <subcellularLocation>
        <location evidence="1">Cytoplasm</location>
    </subcellularLocation>
</comment>
<comment type="similarity">
    <text evidence="1">Belongs to the methylthiotransferase family. RimO subfamily.</text>
</comment>
<keyword id="KW-0004">4Fe-4S</keyword>
<keyword id="KW-0963">Cytoplasm</keyword>
<keyword id="KW-0408">Iron</keyword>
<keyword id="KW-0411">Iron-sulfur</keyword>
<keyword id="KW-0479">Metal-binding</keyword>
<keyword id="KW-0949">S-adenosyl-L-methionine</keyword>
<keyword id="KW-0808">Transferase</keyword>
<dbReference type="EC" id="2.8.4.4" evidence="1"/>
<dbReference type="EMBL" id="CP000076">
    <property type="protein sequence ID" value="AAY90534.1"/>
    <property type="molecule type" value="Genomic_DNA"/>
</dbReference>
<dbReference type="RefSeq" id="WP_011059594.1">
    <property type="nucleotide sequence ID" value="NC_004129.6"/>
</dbReference>
<dbReference type="SMR" id="Q4KHA5"/>
<dbReference type="STRING" id="220664.PFL_1247"/>
<dbReference type="KEGG" id="pfl:PFL_1247"/>
<dbReference type="PATRIC" id="fig|220664.5.peg.1280"/>
<dbReference type="eggNOG" id="COG0621">
    <property type="taxonomic scope" value="Bacteria"/>
</dbReference>
<dbReference type="HOGENOM" id="CLU_018697_0_0_6"/>
<dbReference type="Proteomes" id="UP000008540">
    <property type="component" value="Chromosome"/>
</dbReference>
<dbReference type="GO" id="GO:0005829">
    <property type="term" value="C:cytosol"/>
    <property type="evidence" value="ECO:0007669"/>
    <property type="project" value="TreeGrafter"/>
</dbReference>
<dbReference type="GO" id="GO:0051539">
    <property type="term" value="F:4 iron, 4 sulfur cluster binding"/>
    <property type="evidence" value="ECO:0007669"/>
    <property type="project" value="UniProtKB-UniRule"/>
</dbReference>
<dbReference type="GO" id="GO:0035599">
    <property type="term" value="F:aspartic acid methylthiotransferase activity"/>
    <property type="evidence" value="ECO:0007669"/>
    <property type="project" value="TreeGrafter"/>
</dbReference>
<dbReference type="GO" id="GO:0046872">
    <property type="term" value="F:metal ion binding"/>
    <property type="evidence" value="ECO:0007669"/>
    <property type="project" value="UniProtKB-KW"/>
</dbReference>
<dbReference type="GO" id="GO:0103039">
    <property type="term" value="F:protein methylthiotransferase activity"/>
    <property type="evidence" value="ECO:0007669"/>
    <property type="project" value="UniProtKB-EC"/>
</dbReference>
<dbReference type="GO" id="GO:0006400">
    <property type="term" value="P:tRNA modification"/>
    <property type="evidence" value="ECO:0007669"/>
    <property type="project" value="InterPro"/>
</dbReference>
<dbReference type="CDD" id="cd01335">
    <property type="entry name" value="Radical_SAM"/>
    <property type="match status" value="1"/>
</dbReference>
<dbReference type="FunFam" id="2.40.50.140:FF:000060">
    <property type="entry name" value="Ribosomal protein S12 methylthiotransferase RimO"/>
    <property type="match status" value="1"/>
</dbReference>
<dbReference type="FunFam" id="3.40.50.12160:FF:000002">
    <property type="entry name" value="Ribosomal protein S12 methylthiotransferase RimO"/>
    <property type="match status" value="1"/>
</dbReference>
<dbReference type="FunFam" id="3.80.30.20:FF:000001">
    <property type="entry name" value="tRNA-2-methylthio-N(6)-dimethylallyladenosine synthase 2"/>
    <property type="match status" value="1"/>
</dbReference>
<dbReference type="Gene3D" id="3.40.50.12160">
    <property type="entry name" value="Methylthiotransferase, N-terminal domain"/>
    <property type="match status" value="1"/>
</dbReference>
<dbReference type="Gene3D" id="2.40.50.140">
    <property type="entry name" value="Nucleic acid-binding proteins"/>
    <property type="match status" value="1"/>
</dbReference>
<dbReference type="Gene3D" id="3.80.30.20">
    <property type="entry name" value="tm_1862 like domain"/>
    <property type="match status" value="1"/>
</dbReference>
<dbReference type="HAMAP" id="MF_01865">
    <property type="entry name" value="MTTase_RimO"/>
    <property type="match status" value="1"/>
</dbReference>
<dbReference type="InterPro" id="IPR006638">
    <property type="entry name" value="Elp3/MiaA/NifB-like_rSAM"/>
</dbReference>
<dbReference type="InterPro" id="IPR005839">
    <property type="entry name" value="Methylthiotransferase"/>
</dbReference>
<dbReference type="InterPro" id="IPR020612">
    <property type="entry name" value="Methylthiotransferase_CS"/>
</dbReference>
<dbReference type="InterPro" id="IPR013848">
    <property type="entry name" value="Methylthiotransferase_N"/>
</dbReference>
<dbReference type="InterPro" id="IPR038135">
    <property type="entry name" value="Methylthiotransferase_N_sf"/>
</dbReference>
<dbReference type="InterPro" id="IPR012340">
    <property type="entry name" value="NA-bd_OB-fold"/>
</dbReference>
<dbReference type="InterPro" id="IPR005840">
    <property type="entry name" value="Ribosomal_uS12_MeSTrfase_RimO"/>
</dbReference>
<dbReference type="InterPro" id="IPR007197">
    <property type="entry name" value="rSAM"/>
</dbReference>
<dbReference type="InterPro" id="IPR023404">
    <property type="entry name" value="rSAM_horseshoe"/>
</dbReference>
<dbReference type="InterPro" id="IPR002792">
    <property type="entry name" value="TRAM_dom"/>
</dbReference>
<dbReference type="NCBIfam" id="TIGR01125">
    <property type="entry name" value="30S ribosomal protein S12 methylthiotransferase RimO"/>
    <property type="match status" value="1"/>
</dbReference>
<dbReference type="NCBIfam" id="TIGR00089">
    <property type="entry name" value="MiaB/RimO family radical SAM methylthiotransferase"/>
    <property type="match status" value="1"/>
</dbReference>
<dbReference type="PANTHER" id="PTHR43837">
    <property type="entry name" value="RIBOSOMAL PROTEIN S12 METHYLTHIOTRANSFERASE RIMO"/>
    <property type="match status" value="1"/>
</dbReference>
<dbReference type="PANTHER" id="PTHR43837:SF1">
    <property type="entry name" value="RIBOSOMAL PROTEIN US12 METHYLTHIOTRANSFERASE RIMO"/>
    <property type="match status" value="1"/>
</dbReference>
<dbReference type="Pfam" id="PF04055">
    <property type="entry name" value="Radical_SAM"/>
    <property type="match status" value="1"/>
</dbReference>
<dbReference type="Pfam" id="PF18693">
    <property type="entry name" value="TRAM_2"/>
    <property type="match status" value="1"/>
</dbReference>
<dbReference type="Pfam" id="PF00919">
    <property type="entry name" value="UPF0004"/>
    <property type="match status" value="1"/>
</dbReference>
<dbReference type="SFLD" id="SFLDG01082">
    <property type="entry name" value="B12-binding_domain_containing"/>
    <property type="match status" value="1"/>
</dbReference>
<dbReference type="SFLD" id="SFLDS00029">
    <property type="entry name" value="Radical_SAM"/>
    <property type="match status" value="1"/>
</dbReference>
<dbReference type="SFLD" id="SFLDF00274">
    <property type="entry name" value="ribosomal_protein_S12_methylth"/>
    <property type="match status" value="1"/>
</dbReference>
<dbReference type="SMART" id="SM00729">
    <property type="entry name" value="Elp3"/>
    <property type="match status" value="1"/>
</dbReference>
<dbReference type="SUPFAM" id="SSF102114">
    <property type="entry name" value="Radical SAM enzymes"/>
    <property type="match status" value="1"/>
</dbReference>
<dbReference type="PROSITE" id="PS51449">
    <property type="entry name" value="MTTASE_N"/>
    <property type="match status" value="1"/>
</dbReference>
<dbReference type="PROSITE" id="PS01278">
    <property type="entry name" value="MTTASE_RADICAL"/>
    <property type="match status" value="1"/>
</dbReference>
<dbReference type="PROSITE" id="PS51918">
    <property type="entry name" value="RADICAL_SAM"/>
    <property type="match status" value="1"/>
</dbReference>
<dbReference type="PROSITE" id="PS50926">
    <property type="entry name" value="TRAM"/>
    <property type="match status" value="1"/>
</dbReference>
<gene>
    <name evidence="1" type="primary">rimO</name>
    <name type="ordered locus">PFL_1247</name>
</gene>
<protein>
    <recommendedName>
        <fullName evidence="1">Ribosomal protein uS12 methylthiotransferase RimO</fullName>
        <shortName evidence="1">uS12 MTTase</shortName>
        <shortName evidence="1">uS12 methylthiotransferase</shortName>
        <ecNumber evidence="1">2.8.4.4</ecNumber>
    </recommendedName>
    <alternativeName>
        <fullName evidence="1">Ribosomal protein uS12 (aspartate-C(3))-methylthiotransferase</fullName>
    </alternativeName>
    <alternativeName>
        <fullName evidence="1">Ribosome maturation factor RimO</fullName>
    </alternativeName>
</protein>
<feature type="chain" id="PRO_0000374945" description="Ribosomal protein uS12 methylthiotransferase RimO">
    <location>
        <begin position="1"/>
        <end position="445"/>
    </location>
</feature>
<feature type="domain" description="MTTase N-terminal" evidence="1">
    <location>
        <begin position="10"/>
        <end position="120"/>
    </location>
</feature>
<feature type="domain" description="Radical SAM core" evidence="2">
    <location>
        <begin position="139"/>
        <end position="378"/>
    </location>
</feature>
<feature type="domain" description="TRAM" evidence="1">
    <location>
        <begin position="380"/>
        <end position="445"/>
    </location>
</feature>
<feature type="binding site" evidence="1">
    <location>
        <position position="19"/>
    </location>
    <ligand>
        <name>[4Fe-4S] cluster</name>
        <dbReference type="ChEBI" id="CHEBI:49883"/>
        <label>1</label>
    </ligand>
</feature>
<feature type="binding site" evidence="1">
    <location>
        <position position="55"/>
    </location>
    <ligand>
        <name>[4Fe-4S] cluster</name>
        <dbReference type="ChEBI" id="CHEBI:49883"/>
        <label>1</label>
    </ligand>
</feature>
<feature type="binding site" evidence="1">
    <location>
        <position position="84"/>
    </location>
    <ligand>
        <name>[4Fe-4S] cluster</name>
        <dbReference type="ChEBI" id="CHEBI:49883"/>
        <label>1</label>
    </ligand>
</feature>
<feature type="binding site" evidence="1">
    <location>
        <position position="153"/>
    </location>
    <ligand>
        <name>[4Fe-4S] cluster</name>
        <dbReference type="ChEBI" id="CHEBI:49883"/>
        <label>2</label>
        <note>4Fe-4S-S-AdoMet</note>
    </ligand>
</feature>
<feature type="binding site" evidence="1">
    <location>
        <position position="157"/>
    </location>
    <ligand>
        <name>[4Fe-4S] cluster</name>
        <dbReference type="ChEBI" id="CHEBI:49883"/>
        <label>2</label>
        <note>4Fe-4S-S-AdoMet</note>
    </ligand>
</feature>
<feature type="binding site" evidence="1">
    <location>
        <position position="160"/>
    </location>
    <ligand>
        <name>[4Fe-4S] cluster</name>
        <dbReference type="ChEBI" id="CHEBI:49883"/>
        <label>2</label>
        <note>4Fe-4S-S-AdoMet</note>
    </ligand>
</feature>
<name>RIMO_PSEF5</name>
<proteinExistence type="inferred from homology"/>
<evidence type="ECO:0000255" key="1">
    <source>
        <dbReference type="HAMAP-Rule" id="MF_01865"/>
    </source>
</evidence>
<evidence type="ECO:0000255" key="2">
    <source>
        <dbReference type="PROSITE-ProRule" id="PRU01266"/>
    </source>
</evidence>
<organism>
    <name type="scientific">Pseudomonas fluorescens (strain ATCC BAA-477 / NRRL B-23932 / Pf-5)</name>
    <dbReference type="NCBI Taxonomy" id="220664"/>
    <lineage>
        <taxon>Bacteria</taxon>
        <taxon>Pseudomonadati</taxon>
        <taxon>Pseudomonadota</taxon>
        <taxon>Gammaproteobacteria</taxon>
        <taxon>Pseudomonadales</taxon>
        <taxon>Pseudomonadaceae</taxon>
        <taxon>Pseudomonas</taxon>
    </lineage>
</organism>
<accession>Q4KHA5</accession>
<sequence>MSTPSAPANPKVGFVSLGCPKALVDSERILTQLRMEGYDVVSTYQDADVVVVNTCGFIDSAKAESLEVIGEAIKENGKVIVTGCMGVEEGNIRDVHPSVLAVTGPQQYEQVVNAVHEVVPPKQDHNPLIDLVPPQGIKLTPRHYAYLKISEGCNHSCSFCIIPSMRGKLVSRPVGDVLDEAQRLVKSGVKELLVISQDTSAYGVDVKYRTGFWNGAPVKTRMTELCEALSTLGVWVRLHYVYPYPHVDELIPLMAAGKILPYLDIPFQHASPKVLKAMKRPAFEDKTLARIKNWREICPELIIRSTFIVGFPGETEEDFQYLLNWLTEAQLDRVGCFQYSPVEGAPANDLDLEVVPDEVKQDRWERFMAHQQEISSARLQQRIGKEIEVLIDEVDENGAVGRCFFDAPEIDGNVFIDGAGDLKPGDKVWCRVTDADEYDLWAETL</sequence>